<feature type="signal peptide" evidence="4">
    <location>
        <begin position="1"/>
        <end position="19"/>
    </location>
</feature>
<feature type="chain" id="PRO_0000331231" description="Superoxide dismutase [Cu-Zn]" evidence="4">
    <location>
        <begin position="20"/>
        <end position="180"/>
    </location>
</feature>
<feature type="binding site" evidence="1">
    <location>
        <position position="68"/>
    </location>
    <ligand>
        <name>Cu cation</name>
        <dbReference type="ChEBI" id="CHEBI:23378"/>
        <note>catalytic</note>
    </ligand>
</feature>
<feature type="binding site" evidence="1">
    <location>
        <position position="70"/>
    </location>
    <ligand>
        <name>Cu cation</name>
        <dbReference type="ChEBI" id="CHEBI:23378"/>
        <note>catalytic</note>
    </ligand>
</feature>
<feature type="binding site" evidence="1">
    <location>
        <position position="85"/>
    </location>
    <ligand>
        <name>Cu cation</name>
        <dbReference type="ChEBI" id="CHEBI:23378"/>
        <note>catalytic</note>
    </ligand>
</feature>
<feature type="binding site" evidence="1">
    <location>
        <position position="85"/>
    </location>
    <ligand>
        <name>Zn(2+)</name>
        <dbReference type="ChEBI" id="CHEBI:29105"/>
        <note>structural</note>
    </ligand>
</feature>
<feature type="binding site" evidence="1">
    <location>
        <position position="93"/>
    </location>
    <ligand>
        <name>Zn(2+)</name>
        <dbReference type="ChEBI" id="CHEBI:29105"/>
        <note>structural</note>
    </ligand>
</feature>
<feature type="binding site" evidence="1">
    <location>
        <position position="102"/>
    </location>
    <ligand>
        <name>Zn(2+)</name>
        <dbReference type="ChEBI" id="CHEBI:29105"/>
        <note>structural</note>
    </ligand>
</feature>
<feature type="binding site" evidence="1">
    <location>
        <position position="105"/>
    </location>
    <ligand>
        <name>Zn(2+)</name>
        <dbReference type="ChEBI" id="CHEBI:29105"/>
        <note>structural</note>
    </ligand>
</feature>
<feature type="binding site" evidence="1">
    <location>
        <position position="142"/>
    </location>
    <ligand>
        <name>Cu cation</name>
        <dbReference type="ChEBI" id="CHEBI:23378"/>
        <note>catalytic</note>
    </ligand>
</feature>
<feature type="disulfide bond" evidence="2">
    <location>
        <begin position="79"/>
        <end position="171"/>
    </location>
</feature>
<protein>
    <recommendedName>
        <fullName>Superoxide dismutase [Cu-Zn]</fullName>
        <ecNumber>1.15.1.1</ecNumber>
    </recommendedName>
</protein>
<reference key="1">
    <citation type="journal article" date="2003" name="PLoS Biol.">
        <title>The genome sequence of Caenorhabditis briggsae: a platform for comparative genomics.</title>
        <authorList>
            <person name="Stein L.D."/>
            <person name="Bao Z."/>
            <person name="Blasiar D."/>
            <person name="Blumenthal T."/>
            <person name="Brent M.R."/>
            <person name="Chen N."/>
            <person name="Chinwalla A."/>
            <person name="Clarke L."/>
            <person name="Clee C."/>
            <person name="Coghlan A."/>
            <person name="Coulson A."/>
            <person name="D'Eustachio P."/>
            <person name="Fitch D.H.A."/>
            <person name="Fulton L.A."/>
            <person name="Fulton R.E."/>
            <person name="Griffiths-Jones S."/>
            <person name="Harris T.W."/>
            <person name="Hillier L.W."/>
            <person name="Kamath R."/>
            <person name="Kuwabara P.E."/>
            <person name="Mardis E.R."/>
            <person name="Marra M.A."/>
            <person name="Miner T.L."/>
            <person name="Minx P."/>
            <person name="Mullikin J.C."/>
            <person name="Plumb R.W."/>
            <person name="Rogers J."/>
            <person name="Schein J.E."/>
            <person name="Sohrmann M."/>
            <person name="Spieth J."/>
            <person name="Stajich J.E."/>
            <person name="Wei C."/>
            <person name="Willey D."/>
            <person name="Wilson R.K."/>
            <person name="Durbin R.M."/>
            <person name="Waterston R.H."/>
        </authorList>
    </citation>
    <scope>NUCLEOTIDE SEQUENCE [LARGE SCALE GENOMIC DNA]</scope>
    <source>
        <strain>AF16</strain>
    </source>
</reference>
<gene>
    <name evidence="3" type="primary">sod-1</name>
    <name type="ORF">CBG11197</name>
</gene>
<name>SODC_CAEBR</name>
<dbReference type="EC" id="1.15.1.1"/>
<dbReference type="EMBL" id="HE601002">
    <property type="protein sequence ID" value="CAP30392.3"/>
    <property type="molecule type" value="Genomic_DNA"/>
</dbReference>
<dbReference type="SMR" id="A8XCP3"/>
<dbReference type="FunCoup" id="A8XCP3">
    <property type="interactions" value="1973"/>
</dbReference>
<dbReference type="STRING" id="6238.A8XCP3"/>
<dbReference type="EnsemblMetazoa" id="CBG11197a.1">
    <property type="protein sequence ID" value="CBG11197a.1"/>
    <property type="gene ID" value="WBGene00032360"/>
</dbReference>
<dbReference type="KEGG" id="cbr:CBG_11197"/>
<dbReference type="CTD" id="8571979"/>
<dbReference type="WormBase" id="CBG11197a">
    <property type="protein sequence ID" value="CBP02740"/>
    <property type="gene ID" value="WBGene00032360"/>
    <property type="gene designation" value="Cbr-sod-1"/>
</dbReference>
<dbReference type="eggNOG" id="KOG0441">
    <property type="taxonomic scope" value="Eukaryota"/>
</dbReference>
<dbReference type="HOGENOM" id="CLU_056632_4_1_1"/>
<dbReference type="InParanoid" id="A8XCP3"/>
<dbReference type="OMA" id="GARYACG"/>
<dbReference type="OrthoDB" id="2015551at2759"/>
<dbReference type="Proteomes" id="UP000008549">
    <property type="component" value="Unassembled WGS sequence"/>
</dbReference>
<dbReference type="GO" id="GO:0005829">
    <property type="term" value="C:cytosol"/>
    <property type="evidence" value="ECO:0007669"/>
    <property type="project" value="EnsemblMetazoa"/>
</dbReference>
<dbReference type="GO" id="GO:0005739">
    <property type="term" value="C:mitochondrion"/>
    <property type="evidence" value="ECO:0007669"/>
    <property type="project" value="EnsemblMetazoa"/>
</dbReference>
<dbReference type="GO" id="GO:0005507">
    <property type="term" value="F:copper ion binding"/>
    <property type="evidence" value="ECO:0000318"/>
    <property type="project" value="GO_Central"/>
</dbReference>
<dbReference type="GO" id="GO:0042803">
    <property type="term" value="F:protein homodimerization activity"/>
    <property type="evidence" value="ECO:0000250"/>
    <property type="project" value="UniProtKB"/>
</dbReference>
<dbReference type="GO" id="GO:0004784">
    <property type="term" value="F:superoxide dismutase activity"/>
    <property type="evidence" value="ECO:0000250"/>
    <property type="project" value="UniProtKB"/>
</dbReference>
<dbReference type="GO" id="GO:0060378">
    <property type="term" value="P:regulation of brood size"/>
    <property type="evidence" value="ECO:0000250"/>
    <property type="project" value="UniProtKB"/>
</dbReference>
<dbReference type="GO" id="GO:0040028">
    <property type="term" value="P:regulation of vulval development"/>
    <property type="evidence" value="ECO:0007669"/>
    <property type="project" value="EnsemblMetazoa"/>
</dbReference>
<dbReference type="GO" id="GO:0019430">
    <property type="term" value="P:removal of superoxide radicals"/>
    <property type="evidence" value="ECO:0000318"/>
    <property type="project" value="GO_Central"/>
</dbReference>
<dbReference type="GO" id="GO:0006801">
    <property type="term" value="P:superoxide metabolic process"/>
    <property type="evidence" value="ECO:0000250"/>
    <property type="project" value="UniProtKB"/>
</dbReference>
<dbReference type="CDD" id="cd00305">
    <property type="entry name" value="Cu-Zn_Superoxide_Dismutase"/>
    <property type="match status" value="1"/>
</dbReference>
<dbReference type="FunFam" id="2.60.40.200:FF:000011">
    <property type="entry name" value="Superoxide dismutase [Cu-Zn]"/>
    <property type="match status" value="1"/>
</dbReference>
<dbReference type="Gene3D" id="2.60.40.200">
    <property type="entry name" value="Superoxide dismutase, copper/zinc binding domain"/>
    <property type="match status" value="1"/>
</dbReference>
<dbReference type="InterPro" id="IPR036423">
    <property type="entry name" value="SOD-like_Cu/Zn_dom_sf"/>
</dbReference>
<dbReference type="InterPro" id="IPR024134">
    <property type="entry name" value="SOD_Cu/Zn_/chaperone"/>
</dbReference>
<dbReference type="InterPro" id="IPR018152">
    <property type="entry name" value="SOD_Cu/Zn_BS"/>
</dbReference>
<dbReference type="InterPro" id="IPR001424">
    <property type="entry name" value="SOD_Cu_Zn_dom"/>
</dbReference>
<dbReference type="PANTHER" id="PTHR10003">
    <property type="entry name" value="SUPEROXIDE DISMUTASE CU-ZN -RELATED"/>
    <property type="match status" value="1"/>
</dbReference>
<dbReference type="Pfam" id="PF00080">
    <property type="entry name" value="Sod_Cu"/>
    <property type="match status" value="1"/>
</dbReference>
<dbReference type="PRINTS" id="PR00068">
    <property type="entry name" value="CUZNDISMTASE"/>
</dbReference>
<dbReference type="SUPFAM" id="SSF49329">
    <property type="entry name" value="Cu,Zn superoxide dismutase-like"/>
    <property type="match status" value="1"/>
</dbReference>
<dbReference type="PROSITE" id="PS00087">
    <property type="entry name" value="SOD_CU_ZN_1"/>
    <property type="match status" value="1"/>
</dbReference>
<dbReference type="PROSITE" id="PS00332">
    <property type="entry name" value="SOD_CU_ZN_2"/>
    <property type="match status" value="1"/>
</dbReference>
<evidence type="ECO:0000250" key="1"/>
<evidence type="ECO:0000250" key="2">
    <source>
        <dbReference type="UniProtKB" id="P00441"/>
    </source>
</evidence>
<evidence type="ECO:0000250" key="3">
    <source>
        <dbReference type="UniProtKB" id="P34697"/>
    </source>
</evidence>
<evidence type="ECO:0000255" key="4"/>
<organism>
    <name type="scientific">Caenorhabditis briggsae</name>
    <dbReference type="NCBI Taxonomy" id="6238"/>
    <lineage>
        <taxon>Eukaryota</taxon>
        <taxon>Metazoa</taxon>
        <taxon>Ecdysozoa</taxon>
        <taxon>Nematoda</taxon>
        <taxon>Chromadorea</taxon>
        <taxon>Rhabditida</taxon>
        <taxon>Rhabditina</taxon>
        <taxon>Rhabditomorpha</taxon>
        <taxon>Rhabditoidea</taxon>
        <taxon>Rhabditidae</taxon>
        <taxon>Peloderinae</taxon>
        <taxon>Caenorhabditis</taxon>
    </lineage>
</organism>
<accession>A8XCP3</accession>
<sequence>MFMNLLSQVSNAIFPQVEAAQKMSNRAVAVLRGDVVSGTIWITQNSESDPAVIEGEIKGLTPGLHGFHVHQYGDSTNGCLSAGPHFNPFGKTHGGPNSETRHVGDLGNVEAGADGVAKVHITDKLITLYGANTVIGRSMVVHAGQDDLGQGVGDKAEESAKTGNAGARAACGVIALAAPQ</sequence>
<proteinExistence type="inferred from homology"/>
<comment type="function">
    <text evidence="2 3">Destroys radicals which are normally produced within the cells and which are toxic to biological systems. Required for normal brood size. May be involved in regulating mpk-1 phosphorylation downstream of phosphatase ptp-2 during oocyte maturation.</text>
</comment>
<comment type="catalytic activity">
    <reaction evidence="2">
        <text>2 superoxide + 2 H(+) = H2O2 + O2</text>
        <dbReference type="Rhea" id="RHEA:20696"/>
        <dbReference type="ChEBI" id="CHEBI:15378"/>
        <dbReference type="ChEBI" id="CHEBI:15379"/>
        <dbReference type="ChEBI" id="CHEBI:16240"/>
        <dbReference type="ChEBI" id="CHEBI:18421"/>
        <dbReference type="EC" id="1.15.1.1"/>
    </reaction>
</comment>
<comment type="cofactor">
    <cofactor evidence="2">
        <name>Cu cation</name>
        <dbReference type="ChEBI" id="CHEBI:23378"/>
    </cofactor>
    <text evidence="2">Binds 1 copper ion per subunit.</text>
</comment>
<comment type="cofactor">
    <cofactor evidence="2">
        <name>Zn(2+)</name>
        <dbReference type="ChEBI" id="CHEBI:29105"/>
    </cofactor>
    <text evidence="2">Binds 1 zinc ion per subunit.</text>
</comment>
<comment type="subunit">
    <text evidence="2">Homodimer.</text>
</comment>
<comment type="subcellular location">
    <subcellularLocation>
        <location evidence="2">Cytoplasm</location>
    </subcellularLocation>
</comment>
<comment type="similarity">
    <text evidence="4">Belongs to the Cu-Zn superoxide dismutase family.</text>
</comment>
<keyword id="KW-0049">Antioxidant</keyword>
<keyword id="KW-0186">Copper</keyword>
<keyword id="KW-0963">Cytoplasm</keyword>
<keyword id="KW-1015">Disulfide bond</keyword>
<keyword id="KW-0479">Metal-binding</keyword>
<keyword id="KW-0560">Oxidoreductase</keyword>
<keyword id="KW-1185">Reference proteome</keyword>
<keyword id="KW-0732">Signal</keyword>
<keyword id="KW-0862">Zinc</keyword>